<protein>
    <recommendedName>
        <fullName evidence="1">Adenine phosphoribosyltransferase</fullName>
        <shortName evidence="1">APRT</shortName>
        <ecNumber evidence="1">2.4.2.7</ecNumber>
    </recommendedName>
</protein>
<keyword id="KW-0963">Cytoplasm</keyword>
<keyword id="KW-0328">Glycosyltransferase</keyword>
<keyword id="KW-0660">Purine salvage</keyword>
<keyword id="KW-1185">Reference proteome</keyword>
<keyword id="KW-0808">Transferase</keyword>
<comment type="function">
    <text evidence="1">Catalyzes a salvage reaction resulting in the formation of AMP, that is energically less costly than de novo synthesis.</text>
</comment>
<comment type="catalytic activity">
    <reaction evidence="1">
        <text>AMP + diphosphate = 5-phospho-alpha-D-ribose 1-diphosphate + adenine</text>
        <dbReference type="Rhea" id="RHEA:16609"/>
        <dbReference type="ChEBI" id="CHEBI:16708"/>
        <dbReference type="ChEBI" id="CHEBI:33019"/>
        <dbReference type="ChEBI" id="CHEBI:58017"/>
        <dbReference type="ChEBI" id="CHEBI:456215"/>
        <dbReference type="EC" id="2.4.2.7"/>
    </reaction>
</comment>
<comment type="pathway">
    <text evidence="1">Purine metabolism; AMP biosynthesis via salvage pathway; AMP from adenine: step 1/1.</text>
</comment>
<comment type="subunit">
    <text evidence="1">Homodimer.</text>
</comment>
<comment type="subcellular location">
    <subcellularLocation>
        <location evidence="1">Cytoplasm</location>
    </subcellularLocation>
</comment>
<comment type="similarity">
    <text evidence="1">Belongs to the purine/pyrimidine phosphoribosyltransferase family.</text>
</comment>
<comment type="sequence caution" evidence="2">
    <conflict type="erroneous initiation">
        <sequence resource="EMBL-CDS" id="ABO24102"/>
    </conflict>
</comment>
<name>APT_SHELP</name>
<dbReference type="EC" id="2.4.2.7" evidence="1"/>
<dbReference type="EMBL" id="CP000606">
    <property type="protein sequence ID" value="ABO24102.1"/>
    <property type="status" value="ALT_INIT"/>
    <property type="molecule type" value="Genomic_DNA"/>
</dbReference>
<dbReference type="SMR" id="A3QF54"/>
<dbReference type="STRING" id="323850.Shew_2236"/>
<dbReference type="KEGG" id="slo:Shew_2236"/>
<dbReference type="eggNOG" id="COG0503">
    <property type="taxonomic scope" value="Bacteria"/>
</dbReference>
<dbReference type="HOGENOM" id="CLU_063339_3_0_6"/>
<dbReference type="OrthoDB" id="9803963at2"/>
<dbReference type="UniPathway" id="UPA00588">
    <property type="reaction ID" value="UER00646"/>
</dbReference>
<dbReference type="Proteomes" id="UP000001558">
    <property type="component" value="Chromosome"/>
</dbReference>
<dbReference type="GO" id="GO:0005829">
    <property type="term" value="C:cytosol"/>
    <property type="evidence" value="ECO:0007669"/>
    <property type="project" value="TreeGrafter"/>
</dbReference>
<dbReference type="GO" id="GO:0003999">
    <property type="term" value="F:adenine phosphoribosyltransferase activity"/>
    <property type="evidence" value="ECO:0007669"/>
    <property type="project" value="UniProtKB-UniRule"/>
</dbReference>
<dbReference type="GO" id="GO:0006168">
    <property type="term" value="P:adenine salvage"/>
    <property type="evidence" value="ECO:0007669"/>
    <property type="project" value="InterPro"/>
</dbReference>
<dbReference type="GO" id="GO:0044209">
    <property type="term" value="P:AMP salvage"/>
    <property type="evidence" value="ECO:0007669"/>
    <property type="project" value="UniProtKB-UniRule"/>
</dbReference>
<dbReference type="GO" id="GO:0006166">
    <property type="term" value="P:purine ribonucleoside salvage"/>
    <property type="evidence" value="ECO:0007669"/>
    <property type="project" value="UniProtKB-KW"/>
</dbReference>
<dbReference type="CDD" id="cd06223">
    <property type="entry name" value="PRTases_typeI"/>
    <property type="match status" value="1"/>
</dbReference>
<dbReference type="FunFam" id="3.40.50.2020:FF:000004">
    <property type="entry name" value="Adenine phosphoribosyltransferase"/>
    <property type="match status" value="1"/>
</dbReference>
<dbReference type="Gene3D" id="3.40.50.2020">
    <property type="match status" value="1"/>
</dbReference>
<dbReference type="HAMAP" id="MF_00004">
    <property type="entry name" value="Aden_phosphoribosyltr"/>
    <property type="match status" value="1"/>
</dbReference>
<dbReference type="InterPro" id="IPR005764">
    <property type="entry name" value="Ade_phspho_trans"/>
</dbReference>
<dbReference type="InterPro" id="IPR050120">
    <property type="entry name" value="Adenine_PRTase"/>
</dbReference>
<dbReference type="InterPro" id="IPR000836">
    <property type="entry name" value="PRibTrfase_dom"/>
</dbReference>
<dbReference type="InterPro" id="IPR029057">
    <property type="entry name" value="PRTase-like"/>
</dbReference>
<dbReference type="NCBIfam" id="TIGR01090">
    <property type="entry name" value="apt"/>
    <property type="match status" value="1"/>
</dbReference>
<dbReference type="NCBIfam" id="NF002632">
    <property type="entry name" value="PRK02304.1-1"/>
    <property type="match status" value="1"/>
</dbReference>
<dbReference type="NCBIfam" id="NF002633">
    <property type="entry name" value="PRK02304.1-2"/>
    <property type="match status" value="1"/>
</dbReference>
<dbReference type="NCBIfam" id="NF002634">
    <property type="entry name" value="PRK02304.1-3"/>
    <property type="match status" value="1"/>
</dbReference>
<dbReference type="NCBIfam" id="NF002636">
    <property type="entry name" value="PRK02304.1-5"/>
    <property type="match status" value="1"/>
</dbReference>
<dbReference type="PANTHER" id="PTHR11776">
    <property type="entry name" value="ADENINE PHOSPHORIBOSYLTRANSFERASE"/>
    <property type="match status" value="1"/>
</dbReference>
<dbReference type="PANTHER" id="PTHR11776:SF7">
    <property type="entry name" value="PHOSPHORIBOSYLTRANSFERASE DOMAIN-CONTAINING PROTEIN"/>
    <property type="match status" value="1"/>
</dbReference>
<dbReference type="Pfam" id="PF00156">
    <property type="entry name" value="Pribosyltran"/>
    <property type="match status" value="1"/>
</dbReference>
<dbReference type="SUPFAM" id="SSF53271">
    <property type="entry name" value="PRTase-like"/>
    <property type="match status" value="1"/>
</dbReference>
<dbReference type="PROSITE" id="PS00103">
    <property type="entry name" value="PUR_PYR_PR_TRANSFER"/>
    <property type="match status" value="1"/>
</dbReference>
<organism>
    <name type="scientific">Shewanella loihica (strain ATCC BAA-1088 / PV-4)</name>
    <dbReference type="NCBI Taxonomy" id="323850"/>
    <lineage>
        <taxon>Bacteria</taxon>
        <taxon>Pseudomonadati</taxon>
        <taxon>Pseudomonadota</taxon>
        <taxon>Gammaproteobacteria</taxon>
        <taxon>Alteromonadales</taxon>
        <taxon>Shewanellaceae</taxon>
        <taxon>Shewanella</taxon>
    </lineage>
</organism>
<gene>
    <name evidence="1" type="primary">apt</name>
    <name type="ordered locus">Shew_2236</name>
</gene>
<feature type="chain" id="PRO_0000321405" description="Adenine phosphoribosyltransferase">
    <location>
        <begin position="1"/>
        <end position="181"/>
    </location>
</feature>
<evidence type="ECO:0000255" key="1">
    <source>
        <dbReference type="HAMAP-Rule" id="MF_00004"/>
    </source>
</evidence>
<evidence type="ECO:0000305" key="2"/>
<reference key="1">
    <citation type="submission" date="2007-03" db="EMBL/GenBank/DDBJ databases">
        <title>Complete sequence of Shewanella loihica PV-4.</title>
        <authorList>
            <consortium name="US DOE Joint Genome Institute"/>
            <person name="Copeland A."/>
            <person name="Lucas S."/>
            <person name="Lapidus A."/>
            <person name="Barry K."/>
            <person name="Detter J.C."/>
            <person name="Glavina del Rio T."/>
            <person name="Hammon N."/>
            <person name="Israni S."/>
            <person name="Dalin E."/>
            <person name="Tice H."/>
            <person name="Pitluck S."/>
            <person name="Chain P."/>
            <person name="Malfatti S."/>
            <person name="Shin M."/>
            <person name="Vergez L."/>
            <person name="Schmutz J."/>
            <person name="Larimer F."/>
            <person name="Land M."/>
            <person name="Hauser L."/>
            <person name="Kyrpides N."/>
            <person name="Mikhailova N."/>
            <person name="Romine M.F."/>
            <person name="Serres G."/>
            <person name="Fredrickson J."/>
            <person name="Tiedje J."/>
            <person name="Richardson P."/>
        </authorList>
    </citation>
    <scope>NUCLEOTIDE SEQUENCE [LARGE SCALE GENOMIC DNA]</scope>
    <source>
        <strain>ATCC BAA-1088 / PV-4</strain>
    </source>
</reference>
<sequence>MNTDKLALIKQSIKTIPDYPKPGIMFRDVTSLMEDPAAYQATIALFVERYKDLGVTKVVGTEARGFLFGAPLALELGVGFVPVRKPGKLPRETISESYELEYGHDMLEIHTDAIKPGDKVLVVDDLLATGGTIEATVKLIRQLGGEVEHAAFVISLPELGGEHRLAEMGLSLMTLCEFEGE</sequence>
<accession>A3QF54</accession>
<proteinExistence type="inferred from homology"/>